<gene>
    <name type="primary">IPI3</name>
    <name type="ordered locus">CAGL0J11286g</name>
</gene>
<keyword id="KW-0539">Nucleus</keyword>
<keyword id="KW-1185">Reference proteome</keyword>
<keyword id="KW-0677">Repeat</keyword>
<keyword id="KW-0690">Ribosome biogenesis</keyword>
<keyword id="KW-0698">rRNA processing</keyword>
<keyword id="KW-0853">WD repeat</keyword>
<comment type="function">
    <text evidence="1">Component of the RIX1 complex required for processing of ITS2 sequences from 35S pre-rRNA.</text>
</comment>
<comment type="subunit">
    <text evidence="1">Component of the RIX1 complex, composed of IPI1, RIX1/IPI2 and IPI3 in a 1:2:2 stoichiometry. The complex interacts (via RIX1) with MDN1 (via its hexameric AAA ATPase ring) and the pre-60S ribosome particles.</text>
</comment>
<comment type="subcellular location">
    <subcellularLocation>
        <location evidence="1">Nucleus</location>
    </subcellularLocation>
</comment>
<comment type="similarity">
    <text evidence="2">Belongs to the WD repeat IPI3/WDR18 family.</text>
</comment>
<reference key="1">
    <citation type="journal article" date="2004" name="Nature">
        <title>Genome evolution in yeasts.</title>
        <authorList>
            <person name="Dujon B."/>
            <person name="Sherman D."/>
            <person name="Fischer G."/>
            <person name="Durrens P."/>
            <person name="Casaregola S."/>
            <person name="Lafontaine I."/>
            <person name="de Montigny J."/>
            <person name="Marck C."/>
            <person name="Neuveglise C."/>
            <person name="Talla E."/>
            <person name="Goffard N."/>
            <person name="Frangeul L."/>
            <person name="Aigle M."/>
            <person name="Anthouard V."/>
            <person name="Babour A."/>
            <person name="Barbe V."/>
            <person name="Barnay S."/>
            <person name="Blanchin S."/>
            <person name="Beckerich J.-M."/>
            <person name="Beyne E."/>
            <person name="Bleykasten C."/>
            <person name="Boisrame A."/>
            <person name="Boyer J."/>
            <person name="Cattolico L."/>
            <person name="Confanioleri F."/>
            <person name="de Daruvar A."/>
            <person name="Despons L."/>
            <person name="Fabre E."/>
            <person name="Fairhead C."/>
            <person name="Ferry-Dumazet H."/>
            <person name="Groppi A."/>
            <person name="Hantraye F."/>
            <person name="Hennequin C."/>
            <person name="Jauniaux N."/>
            <person name="Joyet P."/>
            <person name="Kachouri R."/>
            <person name="Kerrest A."/>
            <person name="Koszul R."/>
            <person name="Lemaire M."/>
            <person name="Lesur I."/>
            <person name="Ma L."/>
            <person name="Muller H."/>
            <person name="Nicaud J.-M."/>
            <person name="Nikolski M."/>
            <person name="Oztas S."/>
            <person name="Ozier-Kalogeropoulos O."/>
            <person name="Pellenz S."/>
            <person name="Potier S."/>
            <person name="Richard G.-F."/>
            <person name="Straub M.-L."/>
            <person name="Suleau A."/>
            <person name="Swennen D."/>
            <person name="Tekaia F."/>
            <person name="Wesolowski-Louvel M."/>
            <person name="Westhof E."/>
            <person name="Wirth B."/>
            <person name="Zeniou-Meyer M."/>
            <person name="Zivanovic Y."/>
            <person name="Bolotin-Fukuhara M."/>
            <person name="Thierry A."/>
            <person name="Bouchier C."/>
            <person name="Caudron B."/>
            <person name="Scarpelli C."/>
            <person name="Gaillardin C."/>
            <person name="Weissenbach J."/>
            <person name="Wincker P."/>
            <person name="Souciet J.-L."/>
        </authorList>
    </citation>
    <scope>NUCLEOTIDE SEQUENCE [LARGE SCALE GENOMIC DNA]</scope>
    <source>
        <strain>ATCC 2001 / BCRC 20586 / JCM 3761 / NBRC 0622 / NRRL Y-65 / CBS 138</strain>
    </source>
</reference>
<organism>
    <name type="scientific">Candida glabrata (strain ATCC 2001 / BCRC 20586 / JCM 3761 / NBRC 0622 / NRRL Y-65 / CBS 138)</name>
    <name type="common">Yeast</name>
    <name type="synonym">Nakaseomyces glabratus</name>
    <dbReference type="NCBI Taxonomy" id="284593"/>
    <lineage>
        <taxon>Eukaryota</taxon>
        <taxon>Fungi</taxon>
        <taxon>Dikarya</taxon>
        <taxon>Ascomycota</taxon>
        <taxon>Saccharomycotina</taxon>
        <taxon>Saccharomycetes</taxon>
        <taxon>Saccharomycetales</taxon>
        <taxon>Saccharomycetaceae</taxon>
        <taxon>Nakaseomyces</taxon>
    </lineage>
</organism>
<proteinExistence type="inferred from homology"/>
<sequence length="528" mass="59351">MDESVIFTTEQNALSTSLYSAEQAVLRQCSTNSRNSAVRVGDKYLFVAQSNKALINVYNISGAHKRETVEQRLPTPEVITCLEVIQNRYEEKSAISDFELPHLLLGSTDGGKIYCWELNSGALLSVKQMAHYQGITKIKSFMDGKYFITSGKDSRVIVWQTIDFVSNNASEPKPICILHDHNLTVNDIAVSMTHGANMSTSGAKLFTASEDSTVRCYDFSFLRGDFRKNRKSQEQDQKMYQPRLLATFTFPAAIEAMSLDPADRALYVGTSEGLFSLPLYYTVKGTSTVANLAQASGSNRNKLYSVVISGHDDDYKKLFSMGQLVCDKLISTPVTKLELTFDATTILVGNKFGRISVVEIASKQILKTLQPLTTADTEEDAITNIIVTTVNNSRQDSILEQHQSNKNVQKLPVLQRVVHDKDHAEHEVWYRAPETPEFSHELESLPPIADFEKYMDSIRSEETVFLTTETTSQVKNVKQELAPASHSNSQEQQELQQELQQVKSAYKELRELHESLFKEHEQLLSSMK</sequence>
<name>IPI3_CANGA</name>
<protein>
    <recommendedName>
        <fullName>Pre-rRNA-processing protein IPI3</fullName>
    </recommendedName>
</protein>
<dbReference type="EMBL" id="CR380956">
    <property type="protein sequence ID" value="CAG61154.1"/>
    <property type="molecule type" value="Genomic_DNA"/>
</dbReference>
<dbReference type="RefSeq" id="XP_448203.1">
    <property type="nucleotide sequence ID" value="XM_448203.1"/>
</dbReference>
<dbReference type="SMR" id="Q6FNJ1"/>
<dbReference type="FunCoup" id="Q6FNJ1">
    <property type="interactions" value="497"/>
</dbReference>
<dbReference type="STRING" id="284593.Q6FNJ1"/>
<dbReference type="EnsemblFungi" id="CAGL0J11286g-T">
    <property type="protein sequence ID" value="CAGL0J11286g-T-p1"/>
    <property type="gene ID" value="CAGL0J11286g"/>
</dbReference>
<dbReference type="KEGG" id="cgr:2889493"/>
<dbReference type="CGD" id="CAL0133448">
    <property type="gene designation" value="IPI3"/>
</dbReference>
<dbReference type="VEuPathDB" id="FungiDB:CAGL0J11286g"/>
<dbReference type="eggNOG" id="KOG0646">
    <property type="taxonomic scope" value="Eukaryota"/>
</dbReference>
<dbReference type="HOGENOM" id="CLU_029749_4_0_1"/>
<dbReference type="InParanoid" id="Q6FNJ1"/>
<dbReference type="OMA" id="WEAHYNK"/>
<dbReference type="Proteomes" id="UP000002428">
    <property type="component" value="Chromosome J"/>
</dbReference>
<dbReference type="GO" id="GO:0005656">
    <property type="term" value="C:nuclear pre-replicative complex"/>
    <property type="evidence" value="ECO:0007669"/>
    <property type="project" value="EnsemblFungi"/>
</dbReference>
<dbReference type="GO" id="GO:0120330">
    <property type="term" value="C:rixosome complex"/>
    <property type="evidence" value="ECO:0007669"/>
    <property type="project" value="EnsemblFungi"/>
</dbReference>
<dbReference type="GO" id="GO:0003682">
    <property type="term" value="F:chromatin binding"/>
    <property type="evidence" value="ECO:0007669"/>
    <property type="project" value="EnsemblFungi"/>
</dbReference>
<dbReference type="GO" id="GO:0006267">
    <property type="term" value="P:pre-replicative complex assembly involved in nuclear cell cycle DNA replication"/>
    <property type="evidence" value="ECO:0007669"/>
    <property type="project" value="EnsemblFungi"/>
</dbReference>
<dbReference type="GO" id="GO:0030174">
    <property type="term" value="P:regulation of DNA-templated DNA replication initiation"/>
    <property type="evidence" value="ECO:0007669"/>
    <property type="project" value="EnsemblFungi"/>
</dbReference>
<dbReference type="GO" id="GO:0000027">
    <property type="term" value="P:ribosomal large subunit assembly"/>
    <property type="evidence" value="ECO:0007669"/>
    <property type="project" value="EnsemblFungi"/>
</dbReference>
<dbReference type="GO" id="GO:0006364">
    <property type="term" value="P:rRNA processing"/>
    <property type="evidence" value="ECO:0007669"/>
    <property type="project" value="UniProtKB-KW"/>
</dbReference>
<dbReference type="Gene3D" id="2.130.10.10">
    <property type="entry name" value="YVTN repeat-like/Quinoprotein amine dehydrogenase"/>
    <property type="match status" value="1"/>
</dbReference>
<dbReference type="InterPro" id="IPR015943">
    <property type="entry name" value="WD40/YVTN_repeat-like_dom_sf"/>
</dbReference>
<dbReference type="InterPro" id="IPR036322">
    <property type="entry name" value="WD40_repeat_dom_sf"/>
</dbReference>
<dbReference type="InterPro" id="IPR001680">
    <property type="entry name" value="WD40_rpt"/>
</dbReference>
<dbReference type="InterPro" id="IPR045227">
    <property type="entry name" value="WDR18/Ipi3/RID3"/>
</dbReference>
<dbReference type="PANTHER" id="PTHR18763:SF0">
    <property type="entry name" value="WD REPEAT-CONTAINING PROTEIN 18"/>
    <property type="match status" value="1"/>
</dbReference>
<dbReference type="PANTHER" id="PTHR18763">
    <property type="entry name" value="WD-REPEAT PROTEIN 18"/>
    <property type="match status" value="1"/>
</dbReference>
<dbReference type="Pfam" id="PF00400">
    <property type="entry name" value="WD40"/>
    <property type="match status" value="2"/>
</dbReference>
<dbReference type="SMART" id="SM00320">
    <property type="entry name" value="WD40"/>
    <property type="match status" value="2"/>
</dbReference>
<dbReference type="SUPFAM" id="SSF50978">
    <property type="entry name" value="WD40 repeat-like"/>
    <property type="match status" value="1"/>
</dbReference>
<dbReference type="PROSITE" id="PS50082">
    <property type="entry name" value="WD_REPEATS_2"/>
    <property type="match status" value="1"/>
</dbReference>
<dbReference type="PROSITE" id="PS50294">
    <property type="entry name" value="WD_REPEATS_REGION"/>
    <property type="match status" value="1"/>
</dbReference>
<accession>Q6FNJ1</accession>
<feature type="chain" id="PRO_0000308738" description="Pre-rRNA-processing protein IPI3">
    <location>
        <begin position="1"/>
        <end position="528"/>
    </location>
</feature>
<feature type="repeat" description="WD 1">
    <location>
        <begin position="79"/>
        <end position="126"/>
    </location>
</feature>
<feature type="repeat" description="WD 2">
    <location>
        <begin position="130"/>
        <end position="169"/>
    </location>
</feature>
<feature type="repeat" description="WD 3">
    <location>
        <begin position="188"/>
        <end position="227"/>
    </location>
</feature>
<feature type="repeat" description="WD 4">
    <location>
        <begin position="249"/>
        <end position="290"/>
    </location>
</feature>
<evidence type="ECO:0000250" key="1">
    <source>
        <dbReference type="UniProtKB" id="P53877"/>
    </source>
</evidence>
<evidence type="ECO:0000305" key="2"/>